<organism>
    <name type="scientific">Stigeoclonium helveticum</name>
    <name type="common">Green alga</name>
    <dbReference type="NCBI Taxonomy" id="55999"/>
    <lineage>
        <taxon>Eukaryota</taxon>
        <taxon>Viridiplantae</taxon>
        <taxon>Chlorophyta</taxon>
        <taxon>core chlorophytes</taxon>
        <taxon>Chlorophyceae</taxon>
        <taxon>OCC clade</taxon>
        <taxon>Chaetophorales</taxon>
        <taxon>Chaetophoraceae</taxon>
        <taxon>Stigeoclonium</taxon>
    </lineage>
</organism>
<gene>
    <name evidence="1" type="primary">psbT</name>
</gene>
<accession>Q06SJ0</accession>
<comment type="function">
    <text evidence="1">Found at the monomer-monomer interface of the photosystem II (PS II) dimer, plays a role in assembly and dimerization of PSII. PSII is a light-driven water plastoquinone oxidoreductase, using light energy to abstract electrons from H(2)O, generating a proton gradient subsequently used for ATP formation.</text>
</comment>
<comment type="subunit">
    <text evidence="1">PSII is composed of 1 copy each of membrane proteins PsbA, PsbB, PsbC, PsbD, PsbE, PsbF, PsbH, PsbI, PsbJ, PsbK, PsbL, PsbM, PsbT, PsbY, PsbZ, Psb30/Ycf12, at least 3 peripheral proteins of the oxygen-evolving complex and a large number of cofactors. It forms dimeric complexes.</text>
</comment>
<comment type="subcellular location">
    <subcellularLocation>
        <location evidence="1">Plastid</location>
        <location evidence="1">Chloroplast thylakoid membrane</location>
        <topology evidence="1">Single-pass membrane protein</topology>
    </subcellularLocation>
</comment>
<comment type="similarity">
    <text evidence="1">Belongs to the PsbT family.</text>
</comment>
<proteinExistence type="inferred from homology"/>
<reference key="1">
    <citation type="journal article" date="2006" name="Mol. Genet. Genomics">
        <title>Distinctive architecture of the chloroplast genome in the chlorophycean green alga Stigeoclonium helveticum.</title>
        <authorList>
            <person name="Belanger A.-S."/>
            <person name="Brouard J.-S."/>
            <person name="Charlebois P."/>
            <person name="Otis C."/>
            <person name="Lemieux C."/>
            <person name="Turmel M."/>
        </authorList>
    </citation>
    <scope>NUCLEOTIDE SEQUENCE [LARGE SCALE GENOMIC DNA]</scope>
    <source>
        <strain>UTEX 441</strain>
    </source>
</reference>
<dbReference type="EMBL" id="DQ630521">
    <property type="protein sequence ID" value="ABF60179.1"/>
    <property type="molecule type" value="Genomic_DNA"/>
</dbReference>
<dbReference type="RefSeq" id="YP_764376.1">
    <property type="nucleotide sequence ID" value="NC_008372.1"/>
</dbReference>
<dbReference type="SMR" id="Q06SJ0"/>
<dbReference type="GeneID" id="4308359"/>
<dbReference type="GO" id="GO:0009535">
    <property type="term" value="C:chloroplast thylakoid membrane"/>
    <property type="evidence" value="ECO:0007669"/>
    <property type="project" value="UniProtKB-SubCell"/>
</dbReference>
<dbReference type="GO" id="GO:0009539">
    <property type="term" value="C:photosystem II reaction center"/>
    <property type="evidence" value="ECO:0007669"/>
    <property type="project" value="InterPro"/>
</dbReference>
<dbReference type="GO" id="GO:0015979">
    <property type="term" value="P:photosynthesis"/>
    <property type="evidence" value="ECO:0007669"/>
    <property type="project" value="UniProtKB-UniRule"/>
</dbReference>
<dbReference type="HAMAP" id="MF_00808">
    <property type="entry name" value="PSII_PsbT"/>
    <property type="match status" value="1"/>
</dbReference>
<dbReference type="InterPro" id="IPR001743">
    <property type="entry name" value="PSII_PsbT"/>
</dbReference>
<dbReference type="InterPro" id="IPR037268">
    <property type="entry name" value="PSII_PsbT_sf"/>
</dbReference>
<dbReference type="PANTHER" id="PTHR36411">
    <property type="match status" value="1"/>
</dbReference>
<dbReference type="PANTHER" id="PTHR36411:SF2">
    <property type="entry name" value="PHOTOSYSTEM II REACTION CENTER PROTEIN T"/>
    <property type="match status" value="1"/>
</dbReference>
<dbReference type="Pfam" id="PF01405">
    <property type="entry name" value="PsbT"/>
    <property type="match status" value="1"/>
</dbReference>
<dbReference type="SUPFAM" id="SSF161029">
    <property type="entry name" value="Photosystem II reaction center protein T, PsbT"/>
    <property type="match status" value="1"/>
</dbReference>
<sequence length="31" mass="3644">MEALVYTFLLIGTLGIIFFAIFFREPPRIVR</sequence>
<protein>
    <recommendedName>
        <fullName evidence="1">Photosystem II reaction center protein T</fullName>
        <shortName evidence="1">PSII-T</shortName>
    </recommendedName>
</protein>
<feature type="chain" id="PRO_0000276317" description="Photosystem II reaction center protein T">
    <location>
        <begin position="1"/>
        <end position="31"/>
    </location>
</feature>
<feature type="transmembrane region" description="Helical" evidence="1">
    <location>
        <begin position="3"/>
        <end position="23"/>
    </location>
</feature>
<geneLocation type="chloroplast"/>
<name>PSBT_STIHE</name>
<evidence type="ECO:0000255" key="1">
    <source>
        <dbReference type="HAMAP-Rule" id="MF_00808"/>
    </source>
</evidence>
<keyword id="KW-0150">Chloroplast</keyword>
<keyword id="KW-0472">Membrane</keyword>
<keyword id="KW-0602">Photosynthesis</keyword>
<keyword id="KW-0604">Photosystem II</keyword>
<keyword id="KW-0934">Plastid</keyword>
<keyword id="KW-0793">Thylakoid</keyword>
<keyword id="KW-0812">Transmembrane</keyword>
<keyword id="KW-1133">Transmembrane helix</keyword>